<keyword id="KW-0413">Isomerase</keyword>
<keyword id="KW-0460">Magnesium</keyword>
<keyword id="KW-0479">Metal-binding</keyword>
<keyword id="KW-0597">Phosphoprotein</keyword>
<keyword id="KW-1185">Reference proteome</keyword>
<organism>
    <name type="scientific">Teredinibacter turnerae (strain ATCC 39867 / T7901)</name>
    <dbReference type="NCBI Taxonomy" id="377629"/>
    <lineage>
        <taxon>Bacteria</taxon>
        <taxon>Pseudomonadati</taxon>
        <taxon>Pseudomonadota</taxon>
        <taxon>Gammaproteobacteria</taxon>
        <taxon>Cellvibrionales</taxon>
        <taxon>Cellvibrionaceae</taxon>
        <taxon>Teredinibacter</taxon>
    </lineage>
</organism>
<comment type="function">
    <text evidence="1">Catalyzes the conversion of glucosamine-6-phosphate to glucosamine-1-phosphate.</text>
</comment>
<comment type="catalytic activity">
    <reaction evidence="1">
        <text>alpha-D-glucosamine 1-phosphate = D-glucosamine 6-phosphate</text>
        <dbReference type="Rhea" id="RHEA:23424"/>
        <dbReference type="ChEBI" id="CHEBI:58516"/>
        <dbReference type="ChEBI" id="CHEBI:58725"/>
        <dbReference type="EC" id="5.4.2.10"/>
    </reaction>
</comment>
<comment type="cofactor">
    <cofactor evidence="1">
        <name>Mg(2+)</name>
        <dbReference type="ChEBI" id="CHEBI:18420"/>
    </cofactor>
    <text evidence="1">Binds 1 Mg(2+) ion per subunit.</text>
</comment>
<comment type="PTM">
    <text evidence="1">Activated by phosphorylation.</text>
</comment>
<comment type="similarity">
    <text evidence="1">Belongs to the phosphohexose mutase family.</text>
</comment>
<reference key="1">
    <citation type="journal article" date="2009" name="PLoS ONE">
        <title>The complete genome of Teredinibacter turnerae T7901: an intracellular endosymbiont of marine wood-boring bivalves (shipworms).</title>
        <authorList>
            <person name="Yang J.C."/>
            <person name="Madupu R."/>
            <person name="Durkin A.S."/>
            <person name="Ekborg N.A."/>
            <person name="Pedamallu C.S."/>
            <person name="Hostetler J.B."/>
            <person name="Radune D."/>
            <person name="Toms B.S."/>
            <person name="Henrissat B."/>
            <person name="Coutinho P.M."/>
            <person name="Schwarz S."/>
            <person name="Field L."/>
            <person name="Trindade-Silva A.E."/>
            <person name="Soares C.A.G."/>
            <person name="Elshahawi S."/>
            <person name="Hanora A."/>
            <person name="Schmidt E.W."/>
            <person name="Haygood M.G."/>
            <person name="Posfai J."/>
            <person name="Benner J."/>
            <person name="Madinger C."/>
            <person name="Nove J."/>
            <person name="Anton B."/>
            <person name="Chaudhary K."/>
            <person name="Foster J."/>
            <person name="Holman A."/>
            <person name="Kumar S."/>
            <person name="Lessard P.A."/>
            <person name="Luyten Y.A."/>
            <person name="Slatko B."/>
            <person name="Wood N."/>
            <person name="Wu B."/>
            <person name="Teplitski M."/>
            <person name="Mougous J.D."/>
            <person name="Ward N."/>
            <person name="Eisen J.A."/>
            <person name="Badger J.H."/>
            <person name="Distel D.L."/>
        </authorList>
    </citation>
    <scope>NUCLEOTIDE SEQUENCE [LARGE SCALE GENOMIC DNA]</scope>
    <source>
        <strain>ATCC 39867 / T7901</strain>
    </source>
</reference>
<gene>
    <name evidence="1" type="primary">glmM</name>
    <name type="ordered locus">TERTU_3262</name>
</gene>
<protein>
    <recommendedName>
        <fullName evidence="1">Phosphoglucosamine mutase</fullName>
        <ecNumber evidence="1">5.4.2.10</ecNumber>
    </recommendedName>
</protein>
<sequence>MTRKYFGTDGIRGQVGQGVITPQFFMQLGWAVGKVLAERHADGGGLVLIGKDTRISGYMFESALEAGLIAAGVDVGLLGPMPTPAIAYLTRTFQASAGIVISASHNPFRDNGIKLFNTQGVKLADDVEAAIEHQVDRPMVTAERLGKARRVPDAEGRYIEFCKGTLPWGFSLAGLTVVVDCANGATYNVAPKVFSELGAEVIAISTHPDGENINLNCGSTKLNNLQKQVLESHADIGIAFDGDGDRVQFVDERGEVVDGDQLLFIIAAHKQRHGGGCSGVVGTQMSNFGFELALEALKIPFERAKVGDRYVIEAMNNNGWKLGGESSGHIVCADVTTTGDGIIAALQVLRALNAEAQTLYELKQRMQKMPQVMVNVPVKRKLNLEENDMVQTAIAEAEQRMEGQGRVLLRPSGTEPVIRVMVEGQQHGMVSQLAHELAEVVGRATS</sequence>
<accession>C5BQ00</accession>
<dbReference type="EC" id="5.4.2.10" evidence="1"/>
<dbReference type="EMBL" id="CP001614">
    <property type="protein sequence ID" value="ACR12878.1"/>
    <property type="molecule type" value="Genomic_DNA"/>
</dbReference>
<dbReference type="RefSeq" id="WP_015818991.1">
    <property type="nucleotide sequence ID" value="NC_012997.1"/>
</dbReference>
<dbReference type="SMR" id="C5BQ00"/>
<dbReference type="STRING" id="377629.TERTU_3262"/>
<dbReference type="KEGG" id="ttu:TERTU_3262"/>
<dbReference type="eggNOG" id="COG1109">
    <property type="taxonomic scope" value="Bacteria"/>
</dbReference>
<dbReference type="HOGENOM" id="CLU_016950_7_0_6"/>
<dbReference type="OrthoDB" id="9803322at2"/>
<dbReference type="Proteomes" id="UP000009080">
    <property type="component" value="Chromosome"/>
</dbReference>
<dbReference type="GO" id="GO:0005829">
    <property type="term" value="C:cytosol"/>
    <property type="evidence" value="ECO:0007669"/>
    <property type="project" value="TreeGrafter"/>
</dbReference>
<dbReference type="GO" id="GO:0000287">
    <property type="term" value="F:magnesium ion binding"/>
    <property type="evidence" value="ECO:0007669"/>
    <property type="project" value="UniProtKB-UniRule"/>
</dbReference>
<dbReference type="GO" id="GO:0008966">
    <property type="term" value="F:phosphoglucosamine mutase activity"/>
    <property type="evidence" value="ECO:0007669"/>
    <property type="project" value="UniProtKB-UniRule"/>
</dbReference>
<dbReference type="GO" id="GO:0004615">
    <property type="term" value="F:phosphomannomutase activity"/>
    <property type="evidence" value="ECO:0007669"/>
    <property type="project" value="TreeGrafter"/>
</dbReference>
<dbReference type="GO" id="GO:0005975">
    <property type="term" value="P:carbohydrate metabolic process"/>
    <property type="evidence" value="ECO:0007669"/>
    <property type="project" value="InterPro"/>
</dbReference>
<dbReference type="GO" id="GO:0009252">
    <property type="term" value="P:peptidoglycan biosynthetic process"/>
    <property type="evidence" value="ECO:0007669"/>
    <property type="project" value="TreeGrafter"/>
</dbReference>
<dbReference type="GO" id="GO:0006048">
    <property type="term" value="P:UDP-N-acetylglucosamine biosynthetic process"/>
    <property type="evidence" value="ECO:0007669"/>
    <property type="project" value="TreeGrafter"/>
</dbReference>
<dbReference type="CDD" id="cd05802">
    <property type="entry name" value="GlmM"/>
    <property type="match status" value="1"/>
</dbReference>
<dbReference type="FunFam" id="3.30.310.50:FF:000001">
    <property type="entry name" value="Phosphoglucosamine mutase"/>
    <property type="match status" value="1"/>
</dbReference>
<dbReference type="FunFam" id="3.40.120.10:FF:000001">
    <property type="entry name" value="Phosphoglucosamine mutase"/>
    <property type="match status" value="1"/>
</dbReference>
<dbReference type="FunFam" id="3.40.120.10:FF:000003">
    <property type="entry name" value="Phosphoglucosamine mutase"/>
    <property type="match status" value="1"/>
</dbReference>
<dbReference type="Gene3D" id="3.40.120.10">
    <property type="entry name" value="Alpha-D-Glucose-1,6-Bisphosphate, subunit A, domain 3"/>
    <property type="match status" value="3"/>
</dbReference>
<dbReference type="Gene3D" id="3.30.310.50">
    <property type="entry name" value="Alpha-D-phosphohexomutase, C-terminal domain"/>
    <property type="match status" value="1"/>
</dbReference>
<dbReference type="HAMAP" id="MF_01554_B">
    <property type="entry name" value="GlmM_B"/>
    <property type="match status" value="1"/>
</dbReference>
<dbReference type="InterPro" id="IPR005844">
    <property type="entry name" value="A-D-PHexomutase_a/b/a-I"/>
</dbReference>
<dbReference type="InterPro" id="IPR016055">
    <property type="entry name" value="A-D-PHexomutase_a/b/a-I/II/III"/>
</dbReference>
<dbReference type="InterPro" id="IPR005845">
    <property type="entry name" value="A-D-PHexomutase_a/b/a-II"/>
</dbReference>
<dbReference type="InterPro" id="IPR005846">
    <property type="entry name" value="A-D-PHexomutase_a/b/a-III"/>
</dbReference>
<dbReference type="InterPro" id="IPR005843">
    <property type="entry name" value="A-D-PHexomutase_C"/>
</dbReference>
<dbReference type="InterPro" id="IPR036900">
    <property type="entry name" value="A-D-PHexomutase_C_sf"/>
</dbReference>
<dbReference type="InterPro" id="IPR016066">
    <property type="entry name" value="A-D-PHexomutase_CS"/>
</dbReference>
<dbReference type="InterPro" id="IPR005841">
    <property type="entry name" value="Alpha-D-phosphohexomutase_SF"/>
</dbReference>
<dbReference type="InterPro" id="IPR006352">
    <property type="entry name" value="GlmM_bact"/>
</dbReference>
<dbReference type="InterPro" id="IPR050060">
    <property type="entry name" value="Phosphoglucosamine_mutase"/>
</dbReference>
<dbReference type="NCBIfam" id="TIGR01455">
    <property type="entry name" value="glmM"/>
    <property type="match status" value="1"/>
</dbReference>
<dbReference type="NCBIfam" id="NF008139">
    <property type="entry name" value="PRK10887.1"/>
    <property type="match status" value="1"/>
</dbReference>
<dbReference type="PANTHER" id="PTHR42946:SF1">
    <property type="entry name" value="PHOSPHOGLUCOMUTASE (ALPHA-D-GLUCOSE-1,6-BISPHOSPHATE-DEPENDENT)"/>
    <property type="match status" value="1"/>
</dbReference>
<dbReference type="PANTHER" id="PTHR42946">
    <property type="entry name" value="PHOSPHOHEXOSE MUTASE"/>
    <property type="match status" value="1"/>
</dbReference>
<dbReference type="Pfam" id="PF02878">
    <property type="entry name" value="PGM_PMM_I"/>
    <property type="match status" value="1"/>
</dbReference>
<dbReference type="Pfam" id="PF02879">
    <property type="entry name" value="PGM_PMM_II"/>
    <property type="match status" value="1"/>
</dbReference>
<dbReference type="Pfam" id="PF02880">
    <property type="entry name" value="PGM_PMM_III"/>
    <property type="match status" value="1"/>
</dbReference>
<dbReference type="Pfam" id="PF00408">
    <property type="entry name" value="PGM_PMM_IV"/>
    <property type="match status" value="1"/>
</dbReference>
<dbReference type="PRINTS" id="PR00509">
    <property type="entry name" value="PGMPMM"/>
</dbReference>
<dbReference type="SUPFAM" id="SSF55957">
    <property type="entry name" value="Phosphoglucomutase, C-terminal domain"/>
    <property type="match status" value="1"/>
</dbReference>
<dbReference type="SUPFAM" id="SSF53738">
    <property type="entry name" value="Phosphoglucomutase, first 3 domains"/>
    <property type="match status" value="3"/>
</dbReference>
<dbReference type="PROSITE" id="PS00710">
    <property type="entry name" value="PGM_PMM"/>
    <property type="match status" value="1"/>
</dbReference>
<evidence type="ECO:0000255" key="1">
    <source>
        <dbReference type="HAMAP-Rule" id="MF_01554"/>
    </source>
</evidence>
<proteinExistence type="inferred from homology"/>
<name>GLMM_TERTT</name>
<feature type="chain" id="PRO_1000215498" description="Phosphoglucosamine mutase">
    <location>
        <begin position="1"/>
        <end position="446"/>
    </location>
</feature>
<feature type="active site" description="Phosphoserine intermediate" evidence="1">
    <location>
        <position position="104"/>
    </location>
</feature>
<feature type="binding site" description="via phosphate group" evidence="1">
    <location>
        <position position="104"/>
    </location>
    <ligand>
        <name>Mg(2+)</name>
        <dbReference type="ChEBI" id="CHEBI:18420"/>
    </ligand>
</feature>
<feature type="binding site" evidence="1">
    <location>
        <position position="241"/>
    </location>
    <ligand>
        <name>Mg(2+)</name>
        <dbReference type="ChEBI" id="CHEBI:18420"/>
    </ligand>
</feature>
<feature type="binding site" evidence="1">
    <location>
        <position position="243"/>
    </location>
    <ligand>
        <name>Mg(2+)</name>
        <dbReference type="ChEBI" id="CHEBI:18420"/>
    </ligand>
</feature>
<feature type="binding site" evidence="1">
    <location>
        <position position="245"/>
    </location>
    <ligand>
        <name>Mg(2+)</name>
        <dbReference type="ChEBI" id="CHEBI:18420"/>
    </ligand>
</feature>
<feature type="modified residue" description="Phosphoserine" evidence="1">
    <location>
        <position position="104"/>
    </location>
</feature>